<organism>
    <name type="scientific">Branchiostoma floridae</name>
    <name type="common">Florida lancelet</name>
    <name type="synonym">Amphioxus</name>
    <dbReference type="NCBI Taxonomy" id="7739"/>
    <lineage>
        <taxon>Eukaryota</taxon>
        <taxon>Metazoa</taxon>
        <taxon>Chordata</taxon>
        <taxon>Cephalochordata</taxon>
        <taxon>Leptocardii</taxon>
        <taxon>Amphioxiformes</taxon>
        <taxon>Branchiostomatidae</taxon>
        <taxon>Branchiostoma</taxon>
    </lineage>
</organism>
<comment type="function">
    <text evidence="1">Component of the 40S small ribosomal subunit (By similarity). Plays an important role in controlling cell growth and proliferation through the selective translation of particular classes of mRNA (By similarity).</text>
</comment>
<comment type="PTM">
    <text evidence="1">Ribosomal protein S6 is the major substrate of protein kinases in eukaryote ribosomes.</text>
</comment>
<comment type="similarity">
    <text evidence="3">Belongs to the eukaryotic ribosomal protein eS6 family.</text>
</comment>
<dbReference type="EMBL" id="Z83268">
    <property type="protein sequence ID" value="CAB05857.1"/>
    <property type="molecule type" value="Genomic_DNA"/>
</dbReference>
<dbReference type="SMR" id="O01727"/>
<dbReference type="OMA" id="KPRYKAP"/>
<dbReference type="OrthoDB" id="10260596at2759"/>
<dbReference type="Proteomes" id="UP000001554">
    <property type="component" value="Unplaced"/>
</dbReference>
<dbReference type="GO" id="GO:1990904">
    <property type="term" value="C:ribonucleoprotein complex"/>
    <property type="evidence" value="ECO:0007669"/>
    <property type="project" value="UniProtKB-KW"/>
</dbReference>
<dbReference type="GO" id="GO:0005840">
    <property type="term" value="C:ribosome"/>
    <property type="evidence" value="ECO:0007669"/>
    <property type="project" value="UniProtKB-KW"/>
</dbReference>
<dbReference type="GO" id="GO:0003735">
    <property type="term" value="F:structural constituent of ribosome"/>
    <property type="evidence" value="ECO:0007669"/>
    <property type="project" value="InterPro"/>
</dbReference>
<dbReference type="GO" id="GO:0006412">
    <property type="term" value="P:translation"/>
    <property type="evidence" value="ECO:0007669"/>
    <property type="project" value="InterPro"/>
</dbReference>
<dbReference type="Gene3D" id="1.20.5.2650">
    <property type="match status" value="1"/>
</dbReference>
<dbReference type="InterPro" id="IPR001377">
    <property type="entry name" value="Ribosomal_eS6"/>
</dbReference>
<dbReference type="InterPro" id="IPR014401">
    <property type="entry name" value="Ribosomal_eS6-like"/>
</dbReference>
<dbReference type="InterPro" id="IPR018282">
    <property type="entry name" value="Ribosomal_eS6_CS"/>
</dbReference>
<dbReference type="PANTHER" id="PTHR11502">
    <property type="entry name" value="40S RIBOSOMAL PROTEIN S6"/>
    <property type="match status" value="1"/>
</dbReference>
<dbReference type="Pfam" id="PF01092">
    <property type="entry name" value="Ribosomal_S6e"/>
    <property type="match status" value="1"/>
</dbReference>
<dbReference type="PIRSF" id="PIRSF002129">
    <property type="entry name" value="Ribosom_S6_euk"/>
    <property type="match status" value="1"/>
</dbReference>
<dbReference type="SMART" id="SM01405">
    <property type="entry name" value="Ribosomal_S6e"/>
    <property type="match status" value="1"/>
</dbReference>
<dbReference type="PROSITE" id="PS00578">
    <property type="entry name" value="RIBOSOMAL_S6E"/>
    <property type="match status" value="1"/>
</dbReference>
<protein>
    <recommendedName>
        <fullName evidence="3">Small ribosomal subunit protein eS6</fullName>
    </recommendedName>
    <alternativeName>
        <fullName>40S ribosomal protein S6</fullName>
    </alternativeName>
</protein>
<gene>
    <name type="primary">RPS6</name>
</gene>
<proteinExistence type="inferred from homology"/>
<name>RS6_BRAFL</name>
<keyword id="KW-0597">Phosphoprotein</keyword>
<keyword id="KW-1185">Reference proteome</keyword>
<keyword id="KW-0687">Ribonucleoprotein</keyword>
<keyword id="KW-0689">Ribosomal protein</keyword>
<accession>O01727</accession>
<sequence length="244" mass="28501">MKINISYPATGCQKLIEVDDERKLRPFYEKRMSHQMTAESLGDEWKGYLVRISGGNDKQGFPMKQGVLTNGRVRLLLGKGHSCYRPRRTGERKRKSVRGCIVDSNLSVLNLVILKKGEQDIPGLTDTTIPRRLGPKRAGRIRKLFNLNKEDDVRQYVVRRPLPQKEGKKQKFKTPKIQRLITPQRLQRKRHMRAVKRRRYAKQREEEATYAKLLAKRKKEEREAHAKRRSSARESSLRESKSKA</sequence>
<evidence type="ECO:0000250" key="1">
    <source>
        <dbReference type="UniProtKB" id="P62753"/>
    </source>
</evidence>
<evidence type="ECO:0000256" key="2">
    <source>
        <dbReference type="SAM" id="MobiDB-lite"/>
    </source>
</evidence>
<evidence type="ECO:0000305" key="3"/>
<feature type="chain" id="PRO_0000137320" description="Small ribosomal subunit protein eS6">
    <location>
        <begin position="1"/>
        <end position="244"/>
    </location>
</feature>
<feature type="region of interest" description="Disordered" evidence="2">
    <location>
        <begin position="185"/>
        <end position="244"/>
    </location>
</feature>
<feature type="compositionally biased region" description="Basic residues" evidence="2">
    <location>
        <begin position="186"/>
        <end position="201"/>
    </location>
</feature>
<feature type="compositionally biased region" description="Basic and acidic residues" evidence="2">
    <location>
        <begin position="231"/>
        <end position="244"/>
    </location>
</feature>
<reference key="1">
    <citation type="journal article" date="1997" name="Mol. Cell. Biol.">
        <title>Methylation of genomes and genes at the invertebrate-vertebrate boundary.</title>
        <authorList>
            <person name="Tweedie S."/>
            <person name="Charlton J."/>
            <person name="Clark V."/>
            <person name="Bird A."/>
        </authorList>
    </citation>
    <scope>NUCLEOTIDE SEQUENCE [GENOMIC DNA]</scope>
</reference>